<keyword id="KW-0002">3D-structure</keyword>
<keyword id="KW-1003">Cell membrane</keyword>
<keyword id="KW-0333">Golgi apparatus</keyword>
<keyword id="KW-0449">Lipoprotein</keyword>
<keyword id="KW-0472">Membrane</keyword>
<keyword id="KW-0517">Myogenesis</keyword>
<keyword id="KW-0564">Palmitate</keyword>
<keyword id="KW-1185">Reference proteome</keyword>
<keyword id="KW-0812">Transmembrane</keyword>
<keyword id="KW-1133">Transmembrane helix</keyword>
<proteinExistence type="evidence at protein level"/>
<gene>
    <name evidence="13" type="primary">Mymk</name>
    <name evidence="13" type="synonym">Tmem8c</name>
</gene>
<comment type="function">
    <text evidence="2 3 4 5 7 9">Myoblast-specific protein that mediates myoblast fusion, an essential step for the formation of multi-nucleated muscle fibers (PubMed:23868259, PubMed:28386024, PubMed:28681861, PubMed:30197239). Actively participates in the membrane fusion reaction by mediating the mixing of cell membrane lipids (hemifusion) upstream of MYMX (PubMed:30197239). Acts independently of MYMX (PubMed:30197239). Involved in skeletal muscle regeneration in response to injury by mediating the fusion of satellite cells, a population of muscle stem cells, with injured myofibers (PubMed:25085416). Also involved in skeletal muscle hypertrophy, probably by mediating the fusion of satellite cells with myofibers (PubMed:28186492).</text>
</comment>
<comment type="subunit">
    <text evidence="5">Interacts with MYMX (PubMed:28386024).</text>
</comment>
<comment type="subcellular location">
    <subcellularLocation>
        <location evidence="2 8">Cell membrane</location>
        <topology evidence="2">Multi-pass membrane protein</topology>
    </subcellularLocation>
    <subcellularLocation>
        <location evidence="8">Golgi apparatus membrane</location>
        <topology evidence="8">Multi-pass membrane protein</topology>
    </subcellularLocation>
    <text evidence="2 8">Localizes on the plasma membrane of myoblasts, where it mediates myoblasts fusion (PubMed:23868259, PubMed:28860190). Also localizes in the Golgi apparatus and post-Golgi following palmitoylation; the role of Golgi localization is unclear (PubMed:28860190).</text>
</comment>
<comment type="tissue specificity">
    <text evidence="2 7">Specifically expressed in skeletal muscle during embryogenesis and adult muscle regeneration.</text>
</comment>
<comment type="developmental stage">
    <text evidence="2">During embryogenesis, highly expressed in the myotome compartment of the somites, and later in limb buds and axial skeletal muscles. Specifically expressed in skeletal muscle, and not in other muscle tissues or non-muscle tissues. Expression is down-regulated postnatally.</text>
</comment>
<comment type="induction">
    <text evidence="3 4 6">Expression is induced in muscles in response to muscle injury (PubMed:25085416). Expression is induced in muscle progenitors response to muscle overload (PubMed:28186492). Down-regulated by in microRNA miR-491, which binds specifically to its 3' untranslated region of Mymk leading to its down-regulation (PubMed:28579197).</text>
</comment>
<comment type="PTM">
    <text evidence="8">Palmitoylated at the C-terminus; palmitoylation promotes localization to the Golgi apparatus.</text>
</comment>
<comment type="disruption phenotype">
    <text evidence="2 3 4 9">Perinatal death due to an absence of multi-nucleated muscle fibers (PubMed:23868259). Mice are observed at normal Mendelian ratios at 15 dpc and 17.5 dpc, full-term embryos are alive but are paralyzed and kyphotic with flaccid limbs due to skeletal muscle deficiency (PubMed:23868259). They show a complete absence of differentiated muscle tissue in the trunk, limbs or head (PubMed:23868259). Myoblasts can activate muscle-specific gene expression and differentiate, but lack the ability to fuse (PubMed:23868259). Defects are caused by impaired lipid mixing of cell membranes (PubMed:30197239). Conditional deletion in adult satellite cells, a population of muscle stem cells, completely abolishes muscle regeneration after injury, resulting in severe muscle destruction (PubMed:25085416). Conditional deletion in adult satellite cells impairs skeletal muscle hypertrophy in response to exercise (PubMed:28186492).</text>
</comment>
<comment type="similarity">
    <text evidence="11">Belongs to the TMEM8 family.</text>
</comment>
<dbReference type="EMBL" id="AK003298">
    <property type="protein sequence ID" value="BAB22699.1"/>
    <property type="molecule type" value="mRNA"/>
</dbReference>
<dbReference type="EMBL" id="AL845266">
    <property type="status" value="NOT_ANNOTATED_CDS"/>
    <property type="molecule type" value="Genomic_DNA"/>
</dbReference>
<dbReference type="EMBL" id="BC062145">
    <property type="protein sequence ID" value="AAH62145.1"/>
    <property type="molecule type" value="mRNA"/>
</dbReference>
<dbReference type="CCDS" id="CCDS15823.1"/>
<dbReference type="RefSeq" id="NP_001153074.1">
    <property type="nucleotide sequence ID" value="NM_001159602.1"/>
</dbReference>
<dbReference type="RefSeq" id="NP_079652.1">
    <property type="nucleotide sequence ID" value="NM_025376.3"/>
</dbReference>
<dbReference type="PDB" id="8T03">
    <property type="method" value="EM"/>
    <property type="resolution" value="2.72 A"/>
    <property type="chains" value="A/B=1-221"/>
</dbReference>
<dbReference type="PDB" id="8T04">
    <property type="method" value="EM"/>
    <property type="resolution" value="2.98 A"/>
    <property type="chains" value="A/B=1-221"/>
</dbReference>
<dbReference type="PDB" id="8T06">
    <property type="method" value="EM"/>
    <property type="resolution" value="3.32 A"/>
    <property type="chains" value="A/B=1-221"/>
</dbReference>
<dbReference type="PDB" id="8T07">
    <property type="method" value="EM"/>
    <property type="resolution" value="3.38 A"/>
    <property type="chains" value="A/B=1-221"/>
</dbReference>
<dbReference type="PDBsum" id="8T03"/>
<dbReference type="PDBsum" id="8T04"/>
<dbReference type="PDBsum" id="8T06"/>
<dbReference type="PDBsum" id="8T07"/>
<dbReference type="EMDB" id="EMD-40933"/>
<dbReference type="EMDB" id="EMD-40934"/>
<dbReference type="EMDB" id="EMD-40936"/>
<dbReference type="EMDB" id="EMD-40937"/>
<dbReference type="SMR" id="Q9D1N4"/>
<dbReference type="FunCoup" id="Q9D1N4">
    <property type="interactions" value="494"/>
</dbReference>
<dbReference type="STRING" id="10090.ENSMUSP00000009358"/>
<dbReference type="PhosphoSitePlus" id="Q9D1N4"/>
<dbReference type="PaxDb" id="10090-ENSMUSP00000009358"/>
<dbReference type="Antibodypedia" id="67468">
    <property type="antibodies" value="10 antibodies from 6 providers"/>
</dbReference>
<dbReference type="DNASU" id="66139"/>
<dbReference type="Ensembl" id="ENSMUST00000009358.9">
    <property type="protein sequence ID" value="ENSMUSP00000009358.3"/>
    <property type="gene ID" value="ENSMUSG00000009214.10"/>
</dbReference>
<dbReference type="GeneID" id="66139"/>
<dbReference type="KEGG" id="mmu:66139"/>
<dbReference type="UCSC" id="uc008iwz.2">
    <property type="organism name" value="mouse"/>
</dbReference>
<dbReference type="AGR" id="MGI:1913389"/>
<dbReference type="CTD" id="389827"/>
<dbReference type="MGI" id="MGI:1913389">
    <property type="gene designation" value="Mymk"/>
</dbReference>
<dbReference type="VEuPathDB" id="HostDB:ENSMUSG00000009214"/>
<dbReference type="eggNOG" id="ENOG502REE6">
    <property type="taxonomic scope" value="Eukaryota"/>
</dbReference>
<dbReference type="GeneTree" id="ENSGT00940000160710"/>
<dbReference type="HOGENOM" id="CLU_084233_0_0_1"/>
<dbReference type="InParanoid" id="Q9D1N4"/>
<dbReference type="OMA" id="HHACSGP"/>
<dbReference type="OrthoDB" id="8770806at2759"/>
<dbReference type="PhylomeDB" id="Q9D1N4"/>
<dbReference type="BioGRID-ORCS" id="66139">
    <property type="hits" value="1 hit in 77 CRISPR screens"/>
</dbReference>
<dbReference type="PRO" id="PR:Q9D1N4"/>
<dbReference type="Proteomes" id="UP000000589">
    <property type="component" value="Chromosome 2"/>
</dbReference>
<dbReference type="RNAct" id="Q9D1N4">
    <property type="molecule type" value="protein"/>
</dbReference>
<dbReference type="Bgee" id="ENSMUSG00000009214">
    <property type="expression patterns" value="Expressed in internal carotid artery and 35 other cell types or tissues"/>
</dbReference>
<dbReference type="ExpressionAtlas" id="Q9D1N4">
    <property type="expression patterns" value="baseline and differential"/>
</dbReference>
<dbReference type="GO" id="GO:0000139">
    <property type="term" value="C:Golgi membrane"/>
    <property type="evidence" value="ECO:0000314"/>
    <property type="project" value="UniProtKB"/>
</dbReference>
<dbReference type="GO" id="GO:0005886">
    <property type="term" value="C:plasma membrane"/>
    <property type="evidence" value="ECO:0000314"/>
    <property type="project" value="UniProtKB"/>
</dbReference>
<dbReference type="GO" id="GO:0007517">
    <property type="term" value="P:muscle organ development"/>
    <property type="evidence" value="ECO:0007669"/>
    <property type="project" value="UniProtKB-KW"/>
</dbReference>
<dbReference type="GO" id="GO:0007520">
    <property type="term" value="P:myoblast fusion"/>
    <property type="evidence" value="ECO:0000314"/>
    <property type="project" value="UniProtKB"/>
</dbReference>
<dbReference type="GO" id="GO:0014905">
    <property type="term" value="P:myoblast fusion involved in skeletal muscle regeneration"/>
    <property type="evidence" value="ECO:0000315"/>
    <property type="project" value="MGI"/>
</dbReference>
<dbReference type="GO" id="GO:0045026">
    <property type="term" value="P:plasma membrane fusion"/>
    <property type="evidence" value="ECO:0000314"/>
    <property type="project" value="UniProtKB"/>
</dbReference>
<dbReference type="GO" id="GO:1904206">
    <property type="term" value="P:positive regulation of skeletal muscle hypertrophy"/>
    <property type="evidence" value="ECO:0000314"/>
    <property type="project" value="UniProtKB"/>
</dbReference>
<dbReference type="GO" id="GO:0043403">
    <property type="term" value="P:skeletal muscle tissue regeneration"/>
    <property type="evidence" value="ECO:0000315"/>
    <property type="project" value="MGI"/>
</dbReference>
<dbReference type="InterPro" id="IPR021910">
    <property type="entry name" value="NGX6/PGAP6/MYMK"/>
</dbReference>
<dbReference type="PANTHER" id="PTHR14319">
    <property type="entry name" value="FIVE-SPAN TRANSMEMBRANE PROTEIN M83"/>
    <property type="match status" value="1"/>
</dbReference>
<dbReference type="PANTHER" id="PTHR14319:SF7">
    <property type="entry name" value="POST-GPI ATTACHMENT TO PROTEINS FACTOR 6"/>
    <property type="match status" value="1"/>
</dbReference>
<dbReference type="Pfam" id="PF12036">
    <property type="entry name" value="DUF3522"/>
    <property type="match status" value="1"/>
</dbReference>
<organism>
    <name type="scientific">Mus musculus</name>
    <name type="common">Mouse</name>
    <dbReference type="NCBI Taxonomy" id="10090"/>
    <lineage>
        <taxon>Eukaryota</taxon>
        <taxon>Metazoa</taxon>
        <taxon>Chordata</taxon>
        <taxon>Craniata</taxon>
        <taxon>Vertebrata</taxon>
        <taxon>Euteleostomi</taxon>
        <taxon>Mammalia</taxon>
        <taxon>Eutheria</taxon>
        <taxon>Euarchontoglires</taxon>
        <taxon>Glires</taxon>
        <taxon>Rodentia</taxon>
        <taxon>Myomorpha</taxon>
        <taxon>Muroidea</taxon>
        <taxon>Muridae</taxon>
        <taxon>Murinae</taxon>
        <taxon>Mus</taxon>
        <taxon>Mus</taxon>
    </lineage>
</organism>
<accession>Q9D1N4</accession>
<sequence>MGTVVAKLLLPTLSSLAFLPTVSIATKRRFYMEAMVYLFTMFFVAFSHACDGPGLSVLCFMRRDILEYFSIYGTALSMWVSLMALADFDEPQRSTFTMLGVLTIAVRTFHDRWGYGVYSGPIGTATLIIAVKWLKKMKEKKGLYPDKSIYTQQIGPGLCFGALALMLRFFFEEWDYTYVHSFYHCALAMSFVLLLPKVNKKAGNAGAPAKLTFSTLCCTCV</sequence>
<feature type="chain" id="PRO_0000319063" description="Protein myomaker">
    <location>
        <begin position="1"/>
        <end position="221"/>
    </location>
</feature>
<feature type="topological domain" description="Extracellular" evidence="11">
    <location>
        <begin position="1"/>
        <end position="3"/>
    </location>
</feature>
<feature type="transmembrane region" description="Helical" evidence="1">
    <location>
        <begin position="4"/>
        <end position="24"/>
    </location>
</feature>
<feature type="topological domain" description="Cytoplasmic" evidence="11">
    <location>
        <begin position="25"/>
        <end position="29"/>
    </location>
</feature>
<feature type="transmembrane region" description="Helical" evidence="1">
    <location>
        <begin position="30"/>
        <end position="50"/>
    </location>
</feature>
<feature type="topological domain" description="Extracellular" evidence="11">
    <location>
        <begin position="51"/>
        <end position="64"/>
    </location>
</feature>
<feature type="transmembrane region" description="Helical" evidence="1">
    <location>
        <begin position="65"/>
        <end position="85"/>
    </location>
</feature>
<feature type="topological domain" description="Cytoplasmic" evidence="11">
    <location>
        <begin position="86"/>
        <end position="93"/>
    </location>
</feature>
<feature type="transmembrane region" description="Helical" evidence="1">
    <location>
        <begin position="94"/>
        <end position="110"/>
    </location>
</feature>
<feature type="topological domain" description="Extracellular" evidence="12">
    <location>
        <begin position="111"/>
        <end position="113"/>
    </location>
</feature>
<feature type="transmembrane region" description="Helical" evidence="1">
    <location>
        <begin position="114"/>
        <end position="134"/>
    </location>
</feature>
<feature type="topological domain" description="Cytoplasmic" evidence="12">
    <location>
        <begin position="135"/>
        <end position="153"/>
    </location>
</feature>
<feature type="transmembrane region" description="Helical" evidence="1">
    <location>
        <begin position="154"/>
        <end position="174"/>
    </location>
</feature>
<feature type="topological domain" description="Extracellular" evidence="11">
    <location>
        <position position="175"/>
    </location>
</feature>
<feature type="transmembrane region" description="Helical" evidence="1">
    <location>
        <begin position="176"/>
        <end position="196"/>
    </location>
</feature>
<feature type="topological domain" description="Cytoplasmic" evidence="11">
    <location>
        <begin position="197"/>
        <end position="221"/>
    </location>
</feature>
<feature type="lipid moiety-binding region" description="S-palmitoyl cysteine" evidence="12">
    <location>
        <position position="217"/>
    </location>
</feature>
<feature type="lipid moiety-binding region" description="S-palmitoyl cysteine" evidence="12">
    <location>
        <position position="218"/>
    </location>
</feature>
<feature type="mutagenesis site" description="Does not affect subcellular localization." evidence="8">
    <original>G</original>
    <variation>A</variation>
    <location>
        <position position="2"/>
    </location>
</feature>
<feature type="mutagenesis site" description="Abolished localization to the Golgi apparatus." evidence="8">
    <original>TLCCTCV</original>
    <variation>AAAAAAA</variation>
    <location>
        <begin position="215"/>
        <end position="221"/>
    </location>
</feature>
<feature type="mutagenesis site" description="Does not affect subcellular localization." evidence="8">
    <original>TLCCTCV</original>
    <variation>AACCACA</variation>
    <location>
        <begin position="215"/>
        <end position="221"/>
    </location>
</feature>
<feature type="mutagenesis site" description="Does not affect subcellular localization." evidence="8">
    <original>LCCTCV</original>
    <variation>ACCACA</variation>
    <location>
        <begin position="216"/>
        <end position="221"/>
    </location>
</feature>
<feature type="mutagenesis site" description="Abolished localization to the Golgi apparatus." evidence="8">
    <original>CCTC</original>
    <variation>AATA</variation>
    <variation>SSTS</variation>
    <location>
        <begin position="217"/>
        <end position="220"/>
    </location>
</feature>
<feature type="mutagenesis site" description="Abolished localization to the Golgi apparatus." evidence="8">
    <original>CC</original>
    <variation>SS</variation>
    <location>
        <begin position="217"/>
        <end position="218"/>
    </location>
</feature>
<feature type="mutagenesis site" description="Abolished localization to the Golgi apparatus." evidence="8">
    <original>CTC</original>
    <variation>STS</variation>
    <location>
        <begin position="218"/>
        <end position="220"/>
    </location>
</feature>
<feature type="mutagenesis site" description="Does not affect subcellular localization." evidence="8">
    <original>TCV</original>
    <variation>AAA</variation>
    <location>
        <begin position="219"/>
        <end position="221"/>
    </location>
</feature>
<feature type="helix" evidence="14">
    <location>
        <begin position="6"/>
        <end position="14"/>
    </location>
</feature>
<feature type="helix" evidence="14">
    <location>
        <begin position="15"/>
        <end position="18"/>
    </location>
</feature>
<feature type="helix" evidence="14">
    <location>
        <begin position="19"/>
        <end position="27"/>
    </location>
</feature>
<feature type="helix" evidence="14">
    <location>
        <begin position="31"/>
        <end position="51"/>
    </location>
</feature>
<feature type="turn" evidence="14">
    <location>
        <begin position="53"/>
        <end position="57"/>
    </location>
</feature>
<feature type="helix" evidence="14">
    <location>
        <begin position="63"/>
        <end position="86"/>
    </location>
</feature>
<feature type="helix" evidence="14">
    <location>
        <begin position="92"/>
        <end position="110"/>
    </location>
</feature>
<feature type="strand" evidence="15">
    <location>
        <begin position="112"/>
        <end position="114"/>
    </location>
</feature>
<feature type="turn" evidence="14">
    <location>
        <begin position="115"/>
        <end position="118"/>
    </location>
</feature>
<feature type="helix" evidence="14">
    <location>
        <begin position="119"/>
        <end position="140"/>
    </location>
</feature>
<feature type="helix" evidence="14">
    <location>
        <begin position="147"/>
        <end position="152"/>
    </location>
</feature>
<feature type="helix" evidence="14">
    <location>
        <begin position="154"/>
        <end position="169"/>
    </location>
</feature>
<feature type="helix" evidence="14">
    <location>
        <begin position="171"/>
        <end position="173"/>
    </location>
</feature>
<feature type="helix" evidence="14">
    <location>
        <begin position="177"/>
        <end position="194"/>
    </location>
</feature>
<feature type="turn" evidence="14">
    <location>
        <begin position="200"/>
        <end position="202"/>
    </location>
</feature>
<protein>
    <recommendedName>
        <fullName evidence="10">Protein myomaker</fullName>
    </recommendedName>
    <alternativeName>
        <fullName evidence="10">Myoblast fusion maker</fullName>
    </alternativeName>
    <alternativeName>
        <fullName>Transmembrane protein 8C</fullName>
    </alternativeName>
</protein>
<evidence type="ECO:0000255" key="1"/>
<evidence type="ECO:0000269" key="2">
    <source>
    </source>
</evidence>
<evidence type="ECO:0000269" key="3">
    <source>
    </source>
</evidence>
<evidence type="ECO:0000269" key="4">
    <source>
    </source>
</evidence>
<evidence type="ECO:0000269" key="5">
    <source>
    </source>
</evidence>
<evidence type="ECO:0000269" key="6">
    <source>
    </source>
</evidence>
<evidence type="ECO:0000269" key="7">
    <source>
    </source>
</evidence>
<evidence type="ECO:0000269" key="8">
    <source>
    </source>
</evidence>
<evidence type="ECO:0000269" key="9">
    <source>
    </source>
</evidence>
<evidence type="ECO:0000303" key="10">
    <source>
    </source>
</evidence>
<evidence type="ECO:0000305" key="11"/>
<evidence type="ECO:0000305" key="12">
    <source>
    </source>
</evidence>
<evidence type="ECO:0000312" key="13">
    <source>
        <dbReference type="MGI" id="MGI:1913389"/>
    </source>
</evidence>
<evidence type="ECO:0007829" key="14">
    <source>
        <dbReference type="PDB" id="8T03"/>
    </source>
</evidence>
<evidence type="ECO:0007829" key="15">
    <source>
        <dbReference type="PDB" id="8T04"/>
    </source>
</evidence>
<name>MYMK_MOUSE</name>
<reference key="1">
    <citation type="journal article" date="2005" name="Science">
        <title>The transcriptional landscape of the mammalian genome.</title>
        <authorList>
            <person name="Carninci P."/>
            <person name="Kasukawa T."/>
            <person name="Katayama S."/>
            <person name="Gough J."/>
            <person name="Frith M.C."/>
            <person name="Maeda N."/>
            <person name="Oyama R."/>
            <person name="Ravasi T."/>
            <person name="Lenhard B."/>
            <person name="Wells C."/>
            <person name="Kodzius R."/>
            <person name="Shimokawa K."/>
            <person name="Bajic V.B."/>
            <person name="Brenner S.E."/>
            <person name="Batalov S."/>
            <person name="Forrest A.R."/>
            <person name="Zavolan M."/>
            <person name="Davis M.J."/>
            <person name="Wilming L.G."/>
            <person name="Aidinis V."/>
            <person name="Allen J.E."/>
            <person name="Ambesi-Impiombato A."/>
            <person name="Apweiler R."/>
            <person name="Aturaliya R.N."/>
            <person name="Bailey T.L."/>
            <person name="Bansal M."/>
            <person name="Baxter L."/>
            <person name="Beisel K.W."/>
            <person name="Bersano T."/>
            <person name="Bono H."/>
            <person name="Chalk A.M."/>
            <person name="Chiu K.P."/>
            <person name="Choudhary V."/>
            <person name="Christoffels A."/>
            <person name="Clutterbuck D.R."/>
            <person name="Crowe M.L."/>
            <person name="Dalla E."/>
            <person name="Dalrymple B.P."/>
            <person name="de Bono B."/>
            <person name="Della Gatta G."/>
            <person name="di Bernardo D."/>
            <person name="Down T."/>
            <person name="Engstrom P."/>
            <person name="Fagiolini M."/>
            <person name="Faulkner G."/>
            <person name="Fletcher C.F."/>
            <person name="Fukushima T."/>
            <person name="Furuno M."/>
            <person name="Futaki S."/>
            <person name="Gariboldi M."/>
            <person name="Georgii-Hemming P."/>
            <person name="Gingeras T.R."/>
            <person name="Gojobori T."/>
            <person name="Green R.E."/>
            <person name="Gustincich S."/>
            <person name="Harbers M."/>
            <person name="Hayashi Y."/>
            <person name="Hensch T.K."/>
            <person name="Hirokawa N."/>
            <person name="Hill D."/>
            <person name="Huminiecki L."/>
            <person name="Iacono M."/>
            <person name="Ikeo K."/>
            <person name="Iwama A."/>
            <person name="Ishikawa T."/>
            <person name="Jakt M."/>
            <person name="Kanapin A."/>
            <person name="Katoh M."/>
            <person name="Kawasawa Y."/>
            <person name="Kelso J."/>
            <person name="Kitamura H."/>
            <person name="Kitano H."/>
            <person name="Kollias G."/>
            <person name="Krishnan S.P."/>
            <person name="Kruger A."/>
            <person name="Kummerfeld S.K."/>
            <person name="Kurochkin I.V."/>
            <person name="Lareau L.F."/>
            <person name="Lazarevic D."/>
            <person name="Lipovich L."/>
            <person name="Liu J."/>
            <person name="Liuni S."/>
            <person name="McWilliam S."/>
            <person name="Madan Babu M."/>
            <person name="Madera M."/>
            <person name="Marchionni L."/>
            <person name="Matsuda H."/>
            <person name="Matsuzawa S."/>
            <person name="Miki H."/>
            <person name="Mignone F."/>
            <person name="Miyake S."/>
            <person name="Morris K."/>
            <person name="Mottagui-Tabar S."/>
            <person name="Mulder N."/>
            <person name="Nakano N."/>
            <person name="Nakauchi H."/>
            <person name="Ng P."/>
            <person name="Nilsson R."/>
            <person name="Nishiguchi S."/>
            <person name="Nishikawa S."/>
            <person name="Nori F."/>
            <person name="Ohara O."/>
            <person name="Okazaki Y."/>
            <person name="Orlando V."/>
            <person name="Pang K.C."/>
            <person name="Pavan W.J."/>
            <person name="Pavesi G."/>
            <person name="Pesole G."/>
            <person name="Petrovsky N."/>
            <person name="Piazza S."/>
            <person name="Reed J."/>
            <person name="Reid J.F."/>
            <person name="Ring B.Z."/>
            <person name="Ringwald M."/>
            <person name="Rost B."/>
            <person name="Ruan Y."/>
            <person name="Salzberg S.L."/>
            <person name="Sandelin A."/>
            <person name="Schneider C."/>
            <person name="Schoenbach C."/>
            <person name="Sekiguchi K."/>
            <person name="Semple C.A."/>
            <person name="Seno S."/>
            <person name="Sessa L."/>
            <person name="Sheng Y."/>
            <person name="Shibata Y."/>
            <person name="Shimada H."/>
            <person name="Shimada K."/>
            <person name="Silva D."/>
            <person name="Sinclair B."/>
            <person name="Sperling S."/>
            <person name="Stupka E."/>
            <person name="Sugiura K."/>
            <person name="Sultana R."/>
            <person name="Takenaka Y."/>
            <person name="Taki K."/>
            <person name="Tammoja K."/>
            <person name="Tan S.L."/>
            <person name="Tang S."/>
            <person name="Taylor M.S."/>
            <person name="Tegner J."/>
            <person name="Teichmann S.A."/>
            <person name="Ueda H.R."/>
            <person name="van Nimwegen E."/>
            <person name="Verardo R."/>
            <person name="Wei C.L."/>
            <person name="Yagi K."/>
            <person name="Yamanishi H."/>
            <person name="Zabarovsky E."/>
            <person name="Zhu S."/>
            <person name="Zimmer A."/>
            <person name="Hide W."/>
            <person name="Bult C."/>
            <person name="Grimmond S.M."/>
            <person name="Teasdale R.D."/>
            <person name="Liu E.T."/>
            <person name="Brusic V."/>
            <person name="Quackenbush J."/>
            <person name="Wahlestedt C."/>
            <person name="Mattick J.S."/>
            <person name="Hume D.A."/>
            <person name="Kai C."/>
            <person name="Sasaki D."/>
            <person name="Tomaru Y."/>
            <person name="Fukuda S."/>
            <person name="Kanamori-Katayama M."/>
            <person name="Suzuki M."/>
            <person name="Aoki J."/>
            <person name="Arakawa T."/>
            <person name="Iida J."/>
            <person name="Imamura K."/>
            <person name="Itoh M."/>
            <person name="Kato T."/>
            <person name="Kawaji H."/>
            <person name="Kawagashira N."/>
            <person name="Kawashima T."/>
            <person name="Kojima M."/>
            <person name="Kondo S."/>
            <person name="Konno H."/>
            <person name="Nakano K."/>
            <person name="Ninomiya N."/>
            <person name="Nishio T."/>
            <person name="Okada M."/>
            <person name="Plessy C."/>
            <person name="Shibata K."/>
            <person name="Shiraki T."/>
            <person name="Suzuki S."/>
            <person name="Tagami M."/>
            <person name="Waki K."/>
            <person name="Watahiki A."/>
            <person name="Okamura-Oho Y."/>
            <person name="Suzuki H."/>
            <person name="Kawai J."/>
            <person name="Hayashizaki Y."/>
        </authorList>
    </citation>
    <scope>NUCLEOTIDE SEQUENCE [LARGE SCALE MRNA]</scope>
    <source>
        <strain>C57BL/6J</strain>
        <tissue>Embryo</tissue>
    </source>
</reference>
<reference key="2">
    <citation type="journal article" date="2009" name="PLoS Biol.">
        <title>Lineage-specific biology revealed by a finished genome assembly of the mouse.</title>
        <authorList>
            <person name="Church D.M."/>
            <person name="Goodstadt L."/>
            <person name="Hillier L.W."/>
            <person name="Zody M.C."/>
            <person name="Goldstein S."/>
            <person name="She X."/>
            <person name="Bult C.J."/>
            <person name="Agarwala R."/>
            <person name="Cherry J.L."/>
            <person name="DiCuccio M."/>
            <person name="Hlavina W."/>
            <person name="Kapustin Y."/>
            <person name="Meric P."/>
            <person name="Maglott D."/>
            <person name="Birtle Z."/>
            <person name="Marques A.C."/>
            <person name="Graves T."/>
            <person name="Zhou S."/>
            <person name="Teague B."/>
            <person name="Potamousis K."/>
            <person name="Churas C."/>
            <person name="Place M."/>
            <person name="Herschleb J."/>
            <person name="Runnheim R."/>
            <person name="Forrest D."/>
            <person name="Amos-Landgraf J."/>
            <person name="Schwartz D.C."/>
            <person name="Cheng Z."/>
            <person name="Lindblad-Toh K."/>
            <person name="Eichler E.E."/>
            <person name="Ponting C.P."/>
        </authorList>
    </citation>
    <scope>NUCLEOTIDE SEQUENCE [LARGE SCALE GENOMIC DNA]</scope>
    <source>
        <strain>C57BL/6J</strain>
    </source>
</reference>
<reference key="3">
    <citation type="journal article" date="2004" name="Genome Res.">
        <title>The status, quality, and expansion of the NIH full-length cDNA project: the Mammalian Gene Collection (MGC).</title>
        <authorList>
            <consortium name="The MGC Project Team"/>
        </authorList>
    </citation>
    <scope>NUCLEOTIDE SEQUENCE [LARGE SCALE MRNA]</scope>
    <source>
        <tissue>Jaw</tissue>
        <tissue>Limb</tissue>
    </source>
</reference>
<reference key="4">
    <citation type="journal article" date="2013" name="Nature">
        <title>Myomaker is a membrane activator of myoblast fusion and muscle formation.</title>
        <authorList>
            <person name="Millay D.P."/>
            <person name="O'Rourke J.R."/>
            <person name="Sutherland L.B."/>
            <person name="Bezprozvannaya S."/>
            <person name="Shelton J.M."/>
            <person name="Bassel-Duby R."/>
            <person name="Olson E.N."/>
        </authorList>
    </citation>
    <scope>FUNCTION</scope>
    <scope>SUBCELLULAR LOCATION</scope>
    <scope>TISSUE SPECIFICITY</scope>
    <scope>DEVELOPMENTAL STAGE</scope>
    <scope>DISRUPTION PHENOTYPE</scope>
</reference>
<reference key="5">
    <citation type="journal article" date="2014" name="Genes Dev.">
        <title>Myomaker is essential for muscle regeneration.</title>
        <authorList>
            <person name="Millay D.P."/>
            <person name="Sutherland L.B."/>
            <person name="Bassel-Duby R."/>
            <person name="Olson E.N."/>
        </authorList>
    </citation>
    <scope>FUNCTION</scope>
    <scope>DISRUPTION PHENOTYPE</scope>
    <scope>INDUCTION</scope>
</reference>
<reference key="6">
    <citation type="journal article" date="2017" name="Arch. Biochem. Biophys.">
        <title>miR-491 inhibits skeletal muscle differentiation through targeting myomaker.</title>
        <authorList>
            <person name="He J."/>
            <person name="Wang F."/>
            <person name="Zhang P."/>
            <person name="Li W."/>
            <person name="Wang J."/>
            <person name="Li J."/>
            <person name="Liu H."/>
            <person name="Chen X."/>
        </authorList>
    </citation>
    <scope>INDUCTION</scope>
</reference>
<reference key="7">
    <citation type="journal article" date="2017" name="Elife">
        <title>Requirement of myomaker-mediated stem cell fusion for skeletal muscle hypertrophy.</title>
        <authorList>
            <person name="Goh Q."/>
            <person name="Millay D.P."/>
        </authorList>
    </citation>
    <scope>FUNCTION</scope>
    <scope>DISRUPTION PHENOTYPE</scope>
</reference>
<reference key="8">
    <citation type="journal article" date="2017" name="J. Biol. Chem.">
        <title>Insights into the localization and function of myomaker during myoblast fusion.</title>
        <authorList>
            <person name="Gamage D.G."/>
            <person name="Leikina E."/>
            <person name="Quinn M.E."/>
            <person name="Ratinov A."/>
            <person name="Chernomordik L.V."/>
            <person name="Millay D.P."/>
        </authorList>
    </citation>
    <scope>SUBCELLULAR LOCATION</scope>
    <scope>TOPOLOGY</scope>
    <scope>PALMITOYLATION AT CYS-217 AND CYS-218</scope>
    <scope>MUTAGENESIS OF GLY-2; 215-THR--VAL-221; 216-LEU--VAL-221; 217-CYS--CYS-220; 217-CYS-CYS-218; 218-CYS--CYS-220 AND 219-THR--VAL-221</scope>
</reference>
<reference key="9">
    <citation type="journal article" date="2017" name="Nat. Commun.">
        <title>A defect in myoblast fusion underlies Carey-Fineman-Ziter syndrome.</title>
        <authorList>
            <consortium name="Moebius Syndrome Research Consortium"/>
            <person name="Di Gioia S.A."/>
            <person name="Connors S."/>
            <person name="Matsunami N."/>
            <person name="Cannavino J."/>
            <person name="Rose M.F."/>
            <person name="Gilette N.M."/>
            <person name="Artoni P."/>
            <person name="de Macena Sobreira N.L."/>
            <person name="Chan W.M."/>
            <person name="Webb B.D."/>
            <person name="Robson C.D."/>
            <person name="Cheng L."/>
            <person name="Van Ryzin C."/>
            <person name="Ramirez-Martinez A."/>
            <person name="Mohassel P."/>
            <person name="Leppert M."/>
            <person name="Scholand M.B."/>
            <person name="Grunseich C."/>
            <person name="Ferreira C.R."/>
            <person name="Hartman T."/>
            <person name="Hayes I.M."/>
            <person name="Morgan T."/>
            <person name="Markie D.M."/>
            <person name="Fagiolini M."/>
            <person name="Swift A."/>
            <person name="Chines P.S."/>
            <person name="Speck-Martins C.E."/>
            <person name="Collins F.S."/>
            <person name="Jabs E.W."/>
            <person name="Boennemann C.G."/>
            <person name="Olson E.N."/>
            <person name="Carey J.C."/>
            <person name="Robertson S.P."/>
            <person name="Manoli I."/>
            <person name="Engle E.C."/>
        </authorList>
    </citation>
    <scope>FUNCTION</scope>
    <scope>TISSUE SPECIFICITY</scope>
</reference>
<reference key="10">
    <citation type="journal article" date="2017" name="Science">
        <title>Control of muscle formation by the fusogenic micropeptide myomixer.</title>
        <authorList>
            <person name="Bi P."/>
            <person name="Ramirez-Martinez A."/>
            <person name="Li H."/>
            <person name="Cannavino J."/>
            <person name="McAnally J.R."/>
            <person name="Shelton J.M."/>
            <person name="Sanchez-Ortiz E."/>
            <person name="Bassel-Duby R."/>
            <person name="Olson E.N."/>
        </authorList>
    </citation>
    <scope>FUNCTION</scope>
    <scope>INTERACTION WITH MYMX</scope>
</reference>
<reference key="11">
    <citation type="journal article" date="2018" name="Dev. Cell">
        <title>Myomaker and Myomerger work independently to control distinct steps of membrane remodeling during myoblast fusion.</title>
        <authorList>
            <person name="Leikina E."/>
            <person name="Gamage D.G."/>
            <person name="Prasad V."/>
            <person name="Goykhberg J."/>
            <person name="Crowe M."/>
            <person name="Diao J."/>
            <person name="Kozlov M.M."/>
            <person name="Chernomordik L.V."/>
            <person name="Millay D.P."/>
        </authorList>
    </citation>
    <scope>FUNCTION</scope>
    <scope>DISRUPTION PHENOTYPE</scope>
</reference>